<organism>
    <name type="scientific">Yersinia pseudotuberculosis serotype O:3 (strain YPIII)</name>
    <dbReference type="NCBI Taxonomy" id="502800"/>
    <lineage>
        <taxon>Bacteria</taxon>
        <taxon>Pseudomonadati</taxon>
        <taxon>Pseudomonadota</taxon>
        <taxon>Gammaproteobacteria</taxon>
        <taxon>Enterobacterales</taxon>
        <taxon>Yersiniaceae</taxon>
        <taxon>Yersinia</taxon>
    </lineage>
</organism>
<comment type="subcellular location">
    <subcellularLocation>
        <location evidence="1">Cytoplasm</location>
        <location evidence="1">Nucleoid</location>
    </subcellularLocation>
</comment>
<comment type="similarity">
    <text evidence="1">Belongs to the YejK family.</text>
</comment>
<feature type="chain" id="PRO_1000132738" description="Nucleoid-associated protein YPK_2796">
    <location>
        <begin position="1"/>
        <end position="334"/>
    </location>
</feature>
<dbReference type="EMBL" id="CP000950">
    <property type="protein sequence ID" value="ACA69073.1"/>
    <property type="molecule type" value="Genomic_DNA"/>
</dbReference>
<dbReference type="RefSeq" id="WP_012304331.1">
    <property type="nucleotide sequence ID" value="NZ_CP009792.1"/>
</dbReference>
<dbReference type="SMR" id="B1JS46"/>
<dbReference type="KEGG" id="ypy:YPK_2796"/>
<dbReference type="PATRIC" id="fig|502800.11.peg.3507"/>
<dbReference type="GO" id="GO:0043590">
    <property type="term" value="C:bacterial nucleoid"/>
    <property type="evidence" value="ECO:0007669"/>
    <property type="project" value="TreeGrafter"/>
</dbReference>
<dbReference type="GO" id="GO:0005737">
    <property type="term" value="C:cytoplasm"/>
    <property type="evidence" value="ECO:0007669"/>
    <property type="project" value="UniProtKB-UniRule"/>
</dbReference>
<dbReference type="GO" id="GO:0003690">
    <property type="term" value="F:double-stranded DNA binding"/>
    <property type="evidence" value="ECO:0007669"/>
    <property type="project" value="TreeGrafter"/>
</dbReference>
<dbReference type="GO" id="GO:0003727">
    <property type="term" value="F:single-stranded RNA binding"/>
    <property type="evidence" value="ECO:0007669"/>
    <property type="project" value="TreeGrafter"/>
</dbReference>
<dbReference type="HAMAP" id="MF_00730">
    <property type="entry name" value="NdpA"/>
    <property type="match status" value="1"/>
</dbReference>
<dbReference type="InterPro" id="IPR007358">
    <property type="entry name" value="Nucleoid_associated_NdpA"/>
</dbReference>
<dbReference type="NCBIfam" id="NF001557">
    <property type="entry name" value="PRK00378.1"/>
    <property type="match status" value="1"/>
</dbReference>
<dbReference type="PANTHER" id="PTHR38772">
    <property type="match status" value="1"/>
</dbReference>
<dbReference type="PANTHER" id="PTHR38772:SF1">
    <property type="entry name" value="NUCLEOID-ASSOCIATED PROTEIN YEJK"/>
    <property type="match status" value="1"/>
</dbReference>
<dbReference type="Pfam" id="PF04245">
    <property type="entry name" value="NA37"/>
    <property type="match status" value="1"/>
</dbReference>
<keyword id="KW-0963">Cytoplasm</keyword>
<evidence type="ECO:0000255" key="1">
    <source>
        <dbReference type="HAMAP-Rule" id="MF_00730"/>
    </source>
</evidence>
<name>NDPA_YERPY</name>
<reference key="1">
    <citation type="submission" date="2008-02" db="EMBL/GenBank/DDBJ databases">
        <title>Complete sequence of Yersinia pseudotuberculosis YPIII.</title>
        <authorList>
            <consortium name="US DOE Joint Genome Institute"/>
            <person name="Copeland A."/>
            <person name="Lucas S."/>
            <person name="Lapidus A."/>
            <person name="Glavina del Rio T."/>
            <person name="Dalin E."/>
            <person name="Tice H."/>
            <person name="Bruce D."/>
            <person name="Goodwin L."/>
            <person name="Pitluck S."/>
            <person name="Munk A.C."/>
            <person name="Brettin T."/>
            <person name="Detter J.C."/>
            <person name="Han C."/>
            <person name="Tapia R."/>
            <person name="Schmutz J."/>
            <person name="Larimer F."/>
            <person name="Land M."/>
            <person name="Hauser L."/>
            <person name="Challacombe J.F."/>
            <person name="Green L."/>
            <person name="Lindler L.E."/>
            <person name="Nikolich M.P."/>
            <person name="Richardson P."/>
        </authorList>
    </citation>
    <scope>NUCLEOTIDE SEQUENCE [LARGE SCALE GENOMIC DNA]</scope>
    <source>
        <strain>YPIII</strain>
    </source>
</reference>
<accession>B1JS46</accession>
<protein>
    <recommendedName>
        <fullName evidence="1">Nucleoid-associated protein YPK_2796</fullName>
    </recommendedName>
</protein>
<gene>
    <name type="ordered locus">YPK_2796</name>
</gene>
<proteinExistence type="inferred from homology"/>
<sequence>MSLDIDQIALHQLIKRDEQTLDVVLRDSLLPTNAVVEEMMAELHRVYSAKSKAYGLFNEQSELADALKRSRKGDEDFLSFSRAATGRLRDELAKYPFAEGGVVLFCQYRYLAVEYLLISVLSSCHSMRVNEQLDLSTTHYLDINRADIVARIDLTEWETNPESTRYLTFLKGRVGRKVSDFFMDFLSAAEGLDTKAQNRGLLQAVDDYCADAELGKNERQAYRQQVYSYCNEQLQAGEEIALQALAQELPKLGEKNFQQFSAEQGYALEESFPADRGTLRQLTKFAGSGGGLSINFDALLLDERIFWDAATDTLTIKGTPPNLRDQLQRRAGSK</sequence>